<accession>B7N1U1</accession>
<name>DUT_ECO81</name>
<feature type="chain" id="PRO_1000119236" description="Deoxyuridine 5'-triphosphate nucleotidohydrolase">
    <location>
        <begin position="1"/>
        <end position="151"/>
    </location>
</feature>
<feature type="binding site" evidence="1">
    <location>
        <begin position="70"/>
        <end position="72"/>
    </location>
    <ligand>
        <name>substrate</name>
    </ligand>
</feature>
<feature type="binding site" evidence="1">
    <location>
        <position position="83"/>
    </location>
    <ligand>
        <name>substrate</name>
    </ligand>
</feature>
<feature type="binding site" evidence="1">
    <location>
        <begin position="87"/>
        <end position="89"/>
    </location>
    <ligand>
        <name>substrate</name>
    </ligand>
</feature>
<feature type="binding site" evidence="1">
    <location>
        <position position="97"/>
    </location>
    <ligand>
        <name>substrate</name>
    </ligand>
</feature>
<comment type="function">
    <text evidence="1">This enzyme is involved in nucleotide metabolism: it produces dUMP, the immediate precursor of thymidine nucleotides and it decreases the intracellular concentration of dUTP so that uracil cannot be incorporated into DNA.</text>
</comment>
<comment type="catalytic activity">
    <reaction evidence="1">
        <text>dUTP + H2O = dUMP + diphosphate + H(+)</text>
        <dbReference type="Rhea" id="RHEA:10248"/>
        <dbReference type="ChEBI" id="CHEBI:15377"/>
        <dbReference type="ChEBI" id="CHEBI:15378"/>
        <dbReference type="ChEBI" id="CHEBI:33019"/>
        <dbReference type="ChEBI" id="CHEBI:61555"/>
        <dbReference type="ChEBI" id="CHEBI:246422"/>
        <dbReference type="EC" id="3.6.1.23"/>
    </reaction>
</comment>
<comment type="cofactor">
    <cofactor evidence="1">
        <name>Mg(2+)</name>
        <dbReference type="ChEBI" id="CHEBI:18420"/>
    </cofactor>
</comment>
<comment type="pathway">
    <text evidence="1">Pyrimidine metabolism; dUMP biosynthesis; dUMP from dCTP (dUTP route): step 2/2.</text>
</comment>
<comment type="subunit">
    <text evidence="1">Homotrimer.</text>
</comment>
<comment type="similarity">
    <text evidence="1">Belongs to the dUTPase family.</text>
</comment>
<reference key="1">
    <citation type="journal article" date="2009" name="PLoS Genet.">
        <title>Organised genome dynamics in the Escherichia coli species results in highly diverse adaptive paths.</title>
        <authorList>
            <person name="Touchon M."/>
            <person name="Hoede C."/>
            <person name="Tenaillon O."/>
            <person name="Barbe V."/>
            <person name="Baeriswyl S."/>
            <person name="Bidet P."/>
            <person name="Bingen E."/>
            <person name="Bonacorsi S."/>
            <person name="Bouchier C."/>
            <person name="Bouvet O."/>
            <person name="Calteau A."/>
            <person name="Chiapello H."/>
            <person name="Clermont O."/>
            <person name="Cruveiller S."/>
            <person name="Danchin A."/>
            <person name="Diard M."/>
            <person name="Dossat C."/>
            <person name="Karoui M.E."/>
            <person name="Frapy E."/>
            <person name="Garry L."/>
            <person name="Ghigo J.M."/>
            <person name="Gilles A.M."/>
            <person name="Johnson J."/>
            <person name="Le Bouguenec C."/>
            <person name="Lescat M."/>
            <person name="Mangenot S."/>
            <person name="Martinez-Jehanne V."/>
            <person name="Matic I."/>
            <person name="Nassif X."/>
            <person name="Oztas S."/>
            <person name="Petit M.A."/>
            <person name="Pichon C."/>
            <person name="Rouy Z."/>
            <person name="Ruf C.S."/>
            <person name="Schneider D."/>
            <person name="Tourret J."/>
            <person name="Vacherie B."/>
            <person name="Vallenet D."/>
            <person name="Medigue C."/>
            <person name="Rocha E.P.C."/>
            <person name="Denamur E."/>
        </authorList>
    </citation>
    <scope>NUCLEOTIDE SEQUENCE [LARGE SCALE GENOMIC DNA]</scope>
    <source>
        <strain>ED1a</strain>
    </source>
</reference>
<protein>
    <recommendedName>
        <fullName evidence="1">Deoxyuridine 5'-triphosphate nucleotidohydrolase</fullName>
        <shortName evidence="1">dUTPase</shortName>
        <ecNumber evidence="1">3.6.1.23</ecNumber>
    </recommendedName>
    <alternativeName>
        <fullName evidence="1">dUTP pyrophosphatase</fullName>
    </alternativeName>
</protein>
<organism>
    <name type="scientific">Escherichia coli O81 (strain ED1a)</name>
    <dbReference type="NCBI Taxonomy" id="585397"/>
    <lineage>
        <taxon>Bacteria</taxon>
        <taxon>Pseudomonadati</taxon>
        <taxon>Pseudomonadota</taxon>
        <taxon>Gammaproteobacteria</taxon>
        <taxon>Enterobacterales</taxon>
        <taxon>Enterobacteriaceae</taxon>
        <taxon>Escherichia</taxon>
    </lineage>
</organism>
<proteinExistence type="inferred from homology"/>
<sequence>MKKIDVKILDPRVGKEFPLPTYATSGSAGLDLRACLDDAVELAPGDTTLVPTGLAIHIADPSLAAMMLPRSGLGHKHGIVLGNLVGLIDSDYQGQLMISVWNRGQDNFTIQPGERIAQMIFVPVVQAEFNLVEDFDATDRGEGGFGHSGRQ</sequence>
<evidence type="ECO:0000255" key="1">
    <source>
        <dbReference type="HAMAP-Rule" id="MF_00116"/>
    </source>
</evidence>
<gene>
    <name evidence="1" type="primary">dut</name>
    <name type="ordered locus">ECED1_4324</name>
</gene>
<dbReference type="EC" id="3.6.1.23" evidence="1"/>
<dbReference type="EMBL" id="CU928162">
    <property type="protein sequence ID" value="CAR10311.1"/>
    <property type="molecule type" value="Genomic_DNA"/>
</dbReference>
<dbReference type="SMR" id="B7N1U1"/>
<dbReference type="KEGG" id="ecq:ECED1_4324"/>
<dbReference type="HOGENOM" id="CLU_068508_1_1_6"/>
<dbReference type="UniPathway" id="UPA00610">
    <property type="reaction ID" value="UER00666"/>
</dbReference>
<dbReference type="Proteomes" id="UP000000748">
    <property type="component" value="Chromosome"/>
</dbReference>
<dbReference type="GO" id="GO:0004170">
    <property type="term" value="F:dUTP diphosphatase activity"/>
    <property type="evidence" value="ECO:0007669"/>
    <property type="project" value="UniProtKB-UniRule"/>
</dbReference>
<dbReference type="GO" id="GO:0000287">
    <property type="term" value="F:magnesium ion binding"/>
    <property type="evidence" value="ECO:0007669"/>
    <property type="project" value="UniProtKB-UniRule"/>
</dbReference>
<dbReference type="GO" id="GO:0006226">
    <property type="term" value="P:dUMP biosynthetic process"/>
    <property type="evidence" value="ECO:0007669"/>
    <property type="project" value="UniProtKB-UniRule"/>
</dbReference>
<dbReference type="GO" id="GO:0046081">
    <property type="term" value="P:dUTP catabolic process"/>
    <property type="evidence" value="ECO:0007669"/>
    <property type="project" value="InterPro"/>
</dbReference>
<dbReference type="CDD" id="cd07557">
    <property type="entry name" value="trimeric_dUTPase"/>
    <property type="match status" value="1"/>
</dbReference>
<dbReference type="FunFam" id="2.70.40.10:FF:000002">
    <property type="entry name" value="dUTP diphosphatase"/>
    <property type="match status" value="1"/>
</dbReference>
<dbReference type="Gene3D" id="2.70.40.10">
    <property type="match status" value="1"/>
</dbReference>
<dbReference type="HAMAP" id="MF_00116">
    <property type="entry name" value="dUTPase_bact"/>
    <property type="match status" value="1"/>
</dbReference>
<dbReference type="InterPro" id="IPR008181">
    <property type="entry name" value="dUTPase"/>
</dbReference>
<dbReference type="InterPro" id="IPR029054">
    <property type="entry name" value="dUTPase-like"/>
</dbReference>
<dbReference type="InterPro" id="IPR036157">
    <property type="entry name" value="dUTPase-like_sf"/>
</dbReference>
<dbReference type="InterPro" id="IPR033704">
    <property type="entry name" value="dUTPase_trimeric"/>
</dbReference>
<dbReference type="NCBIfam" id="TIGR00576">
    <property type="entry name" value="dut"/>
    <property type="match status" value="1"/>
</dbReference>
<dbReference type="NCBIfam" id="NF001862">
    <property type="entry name" value="PRK00601.1"/>
    <property type="match status" value="1"/>
</dbReference>
<dbReference type="PANTHER" id="PTHR11241">
    <property type="entry name" value="DEOXYURIDINE 5'-TRIPHOSPHATE NUCLEOTIDOHYDROLASE"/>
    <property type="match status" value="1"/>
</dbReference>
<dbReference type="PANTHER" id="PTHR11241:SF0">
    <property type="entry name" value="DEOXYURIDINE 5'-TRIPHOSPHATE NUCLEOTIDOHYDROLASE"/>
    <property type="match status" value="1"/>
</dbReference>
<dbReference type="Pfam" id="PF00692">
    <property type="entry name" value="dUTPase"/>
    <property type="match status" value="1"/>
</dbReference>
<dbReference type="SUPFAM" id="SSF51283">
    <property type="entry name" value="dUTPase-like"/>
    <property type="match status" value="1"/>
</dbReference>
<keyword id="KW-0378">Hydrolase</keyword>
<keyword id="KW-0460">Magnesium</keyword>
<keyword id="KW-0479">Metal-binding</keyword>
<keyword id="KW-0546">Nucleotide metabolism</keyword>